<name>CCHA2_DROME</name>
<accession>Q8SXL2</accession>
<accession>Q9VFV7</accession>
<reference evidence="10" key="1">
    <citation type="journal article" date="2012" name="Front. Endocrinol.">
        <title>Isolation of the bioactive peptides CCHamide-1 and CCHamide-2 from Drosophila and their putative role in appetite regulation as ligands for G protein-coupled receptors.</title>
        <authorList>
            <person name="Ida T."/>
            <person name="Takahashi T."/>
            <person name="Tominaga H."/>
            <person name="Sato T."/>
            <person name="Sano H."/>
            <person name="Kume K."/>
            <person name="Ozaki M."/>
            <person name="Hiraguchi T."/>
            <person name="Shiotani H."/>
            <person name="Terajima S."/>
            <person name="Nakamura Y."/>
            <person name="Mori K."/>
            <person name="Yoshida M."/>
            <person name="Kato J."/>
            <person name="Murakami N."/>
            <person name="Miyazato M."/>
            <person name="Kangawa K."/>
            <person name="Kojima M."/>
        </authorList>
    </citation>
    <scope>NUCLEOTIDE SEQUENCE [MRNA]</scope>
    <scope>PROTEIN SEQUENCE OF 27-39</scope>
    <scope>FUNCTION</scope>
    <scope>MASS SPECTROMETRY</scope>
    <scope>AMIDATION AT HIS-39</scope>
    <scope>DISULFIDE BOND</scope>
</reference>
<reference evidence="13" key="2">
    <citation type="journal article" date="2000" name="Science">
        <title>The genome sequence of Drosophila melanogaster.</title>
        <authorList>
            <person name="Adams M.D."/>
            <person name="Celniker S.E."/>
            <person name="Holt R.A."/>
            <person name="Evans C.A."/>
            <person name="Gocayne J.D."/>
            <person name="Amanatides P.G."/>
            <person name="Scherer S.E."/>
            <person name="Li P.W."/>
            <person name="Hoskins R.A."/>
            <person name="Galle R.F."/>
            <person name="George R.A."/>
            <person name="Lewis S.E."/>
            <person name="Richards S."/>
            <person name="Ashburner M."/>
            <person name="Henderson S.N."/>
            <person name="Sutton G.G."/>
            <person name="Wortman J.R."/>
            <person name="Yandell M.D."/>
            <person name="Zhang Q."/>
            <person name="Chen L.X."/>
            <person name="Brandon R.C."/>
            <person name="Rogers Y.-H.C."/>
            <person name="Blazej R.G."/>
            <person name="Champe M."/>
            <person name="Pfeiffer B.D."/>
            <person name="Wan K.H."/>
            <person name="Doyle C."/>
            <person name="Baxter E.G."/>
            <person name="Helt G."/>
            <person name="Nelson C.R."/>
            <person name="Miklos G.L.G."/>
            <person name="Abril J.F."/>
            <person name="Agbayani A."/>
            <person name="An H.-J."/>
            <person name="Andrews-Pfannkoch C."/>
            <person name="Baldwin D."/>
            <person name="Ballew R.M."/>
            <person name="Basu A."/>
            <person name="Baxendale J."/>
            <person name="Bayraktaroglu L."/>
            <person name="Beasley E.M."/>
            <person name="Beeson K.Y."/>
            <person name="Benos P.V."/>
            <person name="Berman B.P."/>
            <person name="Bhandari D."/>
            <person name="Bolshakov S."/>
            <person name="Borkova D."/>
            <person name="Botchan M.R."/>
            <person name="Bouck J."/>
            <person name="Brokstein P."/>
            <person name="Brottier P."/>
            <person name="Burtis K.C."/>
            <person name="Busam D.A."/>
            <person name="Butler H."/>
            <person name="Cadieu E."/>
            <person name="Center A."/>
            <person name="Chandra I."/>
            <person name="Cherry J.M."/>
            <person name="Cawley S."/>
            <person name="Dahlke C."/>
            <person name="Davenport L.B."/>
            <person name="Davies P."/>
            <person name="de Pablos B."/>
            <person name="Delcher A."/>
            <person name="Deng Z."/>
            <person name="Mays A.D."/>
            <person name="Dew I."/>
            <person name="Dietz S.M."/>
            <person name="Dodson K."/>
            <person name="Doup L.E."/>
            <person name="Downes M."/>
            <person name="Dugan-Rocha S."/>
            <person name="Dunkov B.C."/>
            <person name="Dunn P."/>
            <person name="Durbin K.J."/>
            <person name="Evangelista C.C."/>
            <person name="Ferraz C."/>
            <person name="Ferriera S."/>
            <person name="Fleischmann W."/>
            <person name="Fosler C."/>
            <person name="Gabrielian A.E."/>
            <person name="Garg N.S."/>
            <person name="Gelbart W.M."/>
            <person name="Glasser K."/>
            <person name="Glodek A."/>
            <person name="Gong F."/>
            <person name="Gorrell J.H."/>
            <person name="Gu Z."/>
            <person name="Guan P."/>
            <person name="Harris M."/>
            <person name="Harris N.L."/>
            <person name="Harvey D.A."/>
            <person name="Heiman T.J."/>
            <person name="Hernandez J.R."/>
            <person name="Houck J."/>
            <person name="Hostin D."/>
            <person name="Houston K.A."/>
            <person name="Howland T.J."/>
            <person name="Wei M.-H."/>
            <person name="Ibegwam C."/>
            <person name="Jalali M."/>
            <person name="Kalush F."/>
            <person name="Karpen G.H."/>
            <person name="Ke Z."/>
            <person name="Kennison J.A."/>
            <person name="Ketchum K.A."/>
            <person name="Kimmel B.E."/>
            <person name="Kodira C.D."/>
            <person name="Kraft C.L."/>
            <person name="Kravitz S."/>
            <person name="Kulp D."/>
            <person name="Lai Z."/>
            <person name="Lasko P."/>
            <person name="Lei Y."/>
            <person name="Levitsky A.A."/>
            <person name="Li J.H."/>
            <person name="Li Z."/>
            <person name="Liang Y."/>
            <person name="Lin X."/>
            <person name="Liu X."/>
            <person name="Mattei B."/>
            <person name="McIntosh T.C."/>
            <person name="McLeod M.P."/>
            <person name="McPherson D."/>
            <person name="Merkulov G."/>
            <person name="Milshina N.V."/>
            <person name="Mobarry C."/>
            <person name="Morris J."/>
            <person name="Moshrefi A."/>
            <person name="Mount S.M."/>
            <person name="Moy M."/>
            <person name="Murphy B."/>
            <person name="Murphy L."/>
            <person name="Muzny D.M."/>
            <person name="Nelson D.L."/>
            <person name="Nelson D.R."/>
            <person name="Nelson K.A."/>
            <person name="Nixon K."/>
            <person name="Nusskern D.R."/>
            <person name="Pacleb J.M."/>
            <person name="Palazzolo M."/>
            <person name="Pittman G.S."/>
            <person name="Pan S."/>
            <person name="Pollard J."/>
            <person name="Puri V."/>
            <person name="Reese M.G."/>
            <person name="Reinert K."/>
            <person name="Remington K."/>
            <person name="Saunders R.D.C."/>
            <person name="Scheeler F."/>
            <person name="Shen H."/>
            <person name="Shue B.C."/>
            <person name="Siden-Kiamos I."/>
            <person name="Simpson M."/>
            <person name="Skupski M.P."/>
            <person name="Smith T.J."/>
            <person name="Spier E."/>
            <person name="Spradling A.C."/>
            <person name="Stapleton M."/>
            <person name="Strong R."/>
            <person name="Sun E."/>
            <person name="Svirskas R."/>
            <person name="Tector C."/>
            <person name="Turner R."/>
            <person name="Venter E."/>
            <person name="Wang A.H."/>
            <person name="Wang X."/>
            <person name="Wang Z.-Y."/>
            <person name="Wassarman D.A."/>
            <person name="Weinstock G.M."/>
            <person name="Weissenbach J."/>
            <person name="Williams S.M."/>
            <person name="Woodage T."/>
            <person name="Worley K.C."/>
            <person name="Wu D."/>
            <person name="Yang S."/>
            <person name="Yao Q.A."/>
            <person name="Ye J."/>
            <person name="Yeh R.-F."/>
            <person name="Zaveri J.S."/>
            <person name="Zhan M."/>
            <person name="Zhang G."/>
            <person name="Zhao Q."/>
            <person name="Zheng L."/>
            <person name="Zheng X.H."/>
            <person name="Zhong F.N."/>
            <person name="Zhong W."/>
            <person name="Zhou X."/>
            <person name="Zhu S.C."/>
            <person name="Zhu X."/>
            <person name="Smith H.O."/>
            <person name="Gibbs R.A."/>
            <person name="Myers E.W."/>
            <person name="Rubin G.M."/>
            <person name="Venter J.C."/>
        </authorList>
    </citation>
    <scope>NUCLEOTIDE SEQUENCE [LARGE SCALE GENOMIC DNA]</scope>
    <source>
        <strain evidence="13">Berkeley</strain>
    </source>
</reference>
<reference evidence="13" key="3">
    <citation type="journal article" date="2002" name="Genome Biol.">
        <title>Annotation of the Drosophila melanogaster euchromatic genome: a systematic review.</title>
        <authorList>
            <person name="Misra S."/>
            <person name="Crosby M.A."/>
            <person name="Mungall C.J."/>
            <person name="Matthews B.B."/>
            <person name="Campbell K.S."/>
            <person name="Hradecky P."/>
            <person name="Huang Y."/>
            <person name="Kaminker J.S."/>
            <person name="Millburn G.H."/>
            <person name="Prochnik S.E."/>
            <person name="Smith C.D."/>
            <person name="Tupy J.L."/>
            <person name="Whitfield E.J."/>
            <person name="Bayraktaroglu L."/>
            <person name="Berman B.P."/>
            <person name="Bettencourt B.R."/>
            <person name="Celniker S.E."/>
            <person name="de Grey A.D.N.J."/>
            <person name="Drysdale R.A."/>
            <person name="Harris N.L."/>
            <person name="Richter J."/>
            <person name="Russo S."/>
            <person name="Schroeder A.J."/>
            <person name="Shu S.Q."/>
            <person name="Stapleton M."/>
            <person name="Yamada C."/>
            <person name="Ashburner M."/>
            <person name="Gelbart W.M."/>
            <person name="Rubin G.M."/>
            <person name="Lewis S.E."/>
        </authorList>
    </citation>
    <scope>GENOME REANNOTATION</scope>
    <source>
        <strain evidence="13">Berkeley</strain>
    </source>
</reference>
<reference evidence="11" key="4">
    <citation type="submission" date="2002-03" db="EMBL/GenBank/DDBJ databases">
        <authorList>
            <person name="Stapleton M."/>
            <person name="Brokstein P."/>
            <person name="Hong L."/>
            <person name="Agbayani A."/>
            <person name="Carlson J."/>
            <person name="Champe M."/>
            <person name="Chavez C."/>
            <person name="Dorsett V."/>
            <person name="Dresnek D."/>
            <person name="Farfan D."/>
            <person name="Frise E."/>
            <person name="George R."/>
            <person name="Gonzalez M."/>
            <person name="Guarin H."/>
            <person name="Kronmiller B."/>
            <person name="Li P."/>
            <person name="Liao G."/>
            <person name="Miranda A."/>
            <person name="Mungall C.J."/>
            <person name="Nunoo J."/>
            <person name="Pacleb J."/>
            <person name="Paragas V."/>
            <person name="Park S."/>
            <person name="Patel S."/>
            <person name="Phouanenavong S."/>
            <person name="Wan K."/>
            <person name="Yu C."/>
            <person name="Lewis S.E."/>
            <person name="Rubin G.M."/>
            <person name="Celniker S."/>
        </authorList>
    </citation>
    <scope>NUCLEOTIDE SEQUENCE [LARGE SCALE MRNA]</scope>
    <source>
        <strain evidence="11">Berkeley</strain>
    </source>
</reference>
<reference evidence="10" key="5">
    <citation type="journal article" date="2011" name="J. Proteome Res.">
        <title>Peptidomics and peptide hormone processing in the Drosophila midgut.</title>
        <authorList>
            <person name="Reiher W."/>
            <person name="Shirras C."/>
            <person name="Kahnt J."/>
            <person name="Baumeister S."/>
            <person name="Isaac R.E."/>
            <person name="Wegener C."/>
        </authorList>
    </citation>
    <scope>PROTEIN SEQUENCE OF 27-39</scope>
    <scope>IDENTIFICATION BY MASS SPECTROMETRY</scope>
    <scope>MASS SPECTROMETRY</scope>
    <scope>AMIDATION AT HIS-39</scope>
    <scope>DISULFIDE BOND</scope>
</reference>
<reference evidence="10" key="6">
    <citation type="journal article" date="2011" name="Biochem. Biophys. Res. Commun.">
        <title>The Drosophila genes CG14593 and CG30106 code for G-protein-coupled receptors specifically activated by the neuropeptides CCHamide-1 and CCHamide-2.</title>
        <authorList>
            <person name="Hansen K.K."/>
            <person name="Hauser F."/>
            <person name="Williamson M."/>
            <person name="Weber S.B."/>
            <person name="Grimmelikhuijzen C.J."/>
        </authorList>
    </citation>
    <scope>FUNCTION</scope>
</reference>
<reference evidence="10" key="7">
    <citation type="journal article" date="2013" name="PLoS ONE">
        <title>Expression patterns of the Drosophila neuropeptide CCHamide-2 and its receptor may suggest hormonal signaling from the gut to the brain.</title>
        <authorList>
            <person name="Li S."/>
            <person name="Torre-Muruzabal T."/>
            <person name="Soegaard K.C."/>
            <person name="Ren G.R."/>
            <person name="Hauser F."/>
            <person name="Engelsen S.M."/>
            <person name="Poedenphanth M.D."/>
            <person name="Desjardins A."/>
            <person name="Grimmelikhuijzen C.J."/>
        </authorList>
    </citation>
    <scope>TISSUE SPECIFICITY</scope>
    <scope>DEVELOPMENTAL STAGE</scope>
    <source>
        <strain>Canton-S</strain>
    </source>
</reference>
<reference evidence="10" key="8">
    <citation type="journal article" date="2014" name="Cell Tissue Res.">
        <title>More Drosophila enteroendocrine peptides: Orcokinin B and the CCHamides 1 and 2.</title>
        <authorList>
            <person name="Veenstra J.A."/>
            <person name="Ida T."/>
        </authorList>
    </citation>
    <scope>TISSUE SPECIFICITY</scope>
</reference>
<reference evidence="10" key="9">
    <citation type="journal article" date="2015" name="PLoS ONE">
        <title>CCHamide-2 is an orexigenic brain-gut peptide in Drosophila.</title>
        <authorList>
            <person name="Ren G.R."/>
            <person name="Hauser F."/>
            <person name="Rewitz K.F."/>
            <person name="Kondo S."/>
            <person name="Engelbrecht A.F."/>
            <person name="Didriksen A.K."/>
            <person name="Schjoett S.R."/>
            <person name="Sembach F.E."/>
            <person name="Li S."/>
            <person name="Soegaard K.C."/>
            <person name="Soendergaard L."/>
            <person name="Grimmelikhuijzen C.J."/>
        </authorList>
    </citation>
    <scope>FUNCTION</scope>
    <scope>TISSUE SPECIFICITY</scope>
    <scope>DISRUPTION PHENOTYPE</scope>
</reference>
<reference evidence="10" key="10">
    <citation type="journal article" date="2015" name="PLoS Genet.">
        <title>The nutrient-responsive hormone CCHamide-2 controls growth by regulating insulin-like peptides in the brain of Drosophila melanogaster.</title>
        <authorList>
            <person name="Sano H."/>
            <person name="Nakamura A."/>
            <person name="Texada M.J."/>
            <person name="Truman J.W."/>
            <person name="Ishimoto H."/>
            <person name="Kamikouchi A."/>
            <person name="Nibu Y."/>
            <person name="Kume K."/>
            <person name="Ida T."/>
            <person name="Kojima M."/>
        </authorList>
    </citation>
    <scope>FUNCTION</scope>
    <scope>TISSUE SPECIFICITY</scope>
    <scope>INDUCTION</scope>
    <scope>DISRUPTION PHENOTYPE</scope>
</reference>
<reference key="11">
    <citation type="journal article" date="2015" name="PLoS Genet.">
        <authorList>
            <person name="Sano H."/>
            <person name="Nakamura A."/>
            <person name="Texada M.J."/>
            <person name="Truman J.W."/>
            <person name="Ishimoto H."/>
            <person name="Kamikouchi A."/>
            <person name="Nibu Y."/>
            <person name="Kume K."/>
            <person name="Ida T."/>
            <person name="Kojima M."/>
        </authorList>
    </citation>
    <scope>ERRATUM OF PUBMED:26020940</scope>
</reference>
<dbReference type="EMBL" id="AE014297">
    <property type="protein sequence ID" value="AAF54942.2"/>
    <property type="molecule type" value="Genomic_DNA"/>
</dbReference>
<dbReference type="EMBL" id="AE014297">
    <property type="protein sequence ID" value="ADV37307.1"/>
    <property type="molecule type" value="Genomic_DNA"/>
</dbReference>
<dbReference type="EMBL" id="AE014297">
    <property type="protein sequence ID" value="ADV37308.1"/>
    <property type="molecule type" value="Genomic_DNA"/>
</dbReference>
<dbReference type="EMBL" id="AY089576">
    <property type="protein sequence ID" value="AAL90314.1"/>
    <property type="molecule type" value="mRNA"/>
</dbReference>
<dbReference type="RefSeq" id="NP_001189216.1">
    <property type="nucleotide sequence ID" value="NM_001202287.1"/>
</dbReference>
<dbReference type="RefSeq" id="NP_001189217.1">
    <property type="nucleotide sequence ID" value="NM_001202288.1"/>
</dbReference>
<dbReference type="RefSeq" id="NP_650285.1">
    <property type="nucleotide sequence ID" value="NM_142028.3"/>
</dbReference>
<dbReference type="FunCoup" id="Q8SXL2">
    <property type="interactions" value="41"/>
</dbReference>
<dbReference type="STRING" id="7227.FBpp0292355"/>
<dbReference type="PaxDb" id="7227-FBpp0082230"/>
<dbReference type="DNASU" id="41648"/>
<dbReference type="EnsemblMetazoa" id="FBtr0082762">
    <property type="protein sequence ID" value="FBpp0082230"/>
    <property type="gene ID" value="FBgn0038147"/>
</dbReference>
<dbReference type="EnsemblMetazoa" id="FBtr0303262">
    <property type="protein sequence ID" value="FBpp0292354"/>
    <property type="gene ID" value="FBgn0038147"/>
</dbReference>
<dbReference type="EnsemblMetazoa" id="FBtr0303263">
    <property type="protein sequence ID" value="FBpp0292355"/>
    <property type="gene ID" value="FBgn0038147"/>
</dbReference>
<dbReference type="GeneID" id="41648"/>
<dbReference type="KEGG" id="dme:Dmel_CG14375"/>
<dbReference type="UCSC" id="CG14375-RA">
    <property type="organism name" value="d. melanogaster"/>
</dbReference>
<dbReference type="AGR" id="FB:FBgn0038147"/>
<dbReference type="CTD" id="41648"/>
<dbReference type="FlyBase" id="FBgn0038147">
    <property type="gene designation" value="CCHa2"/>
</dbReference>
<dbReference type="VEuPathDB" id="VectorBase:FBgn0038147"/>
<dbReference type="eggNOG" id="ENOG502SFM9">
    <property type="taxonomic scope" value="Eukaryota"/>
</dbReference>
<dbReference type="HOGENOM" id="CLU_1898380_0_0_1"/>
<dbReference type="InParanoid" id="Q8SXL2"/>
<dbReference type="OMA" id="KIMRSWF"/>
<dbReference type="OrthoDB" id="6366777at2759"/>
<dbReference type="PhylomeDB" id="Q8SXL2"/>
<dbReference type="BioGRID-ORCS" id="41648">
    <property type="hits" value="0 hits in 1 CRISPR screen"/>
</dbReference>
<dbReference type="GenomeRNAi" id="41648"/>
<dbReference type="PRO" id="PR:Q8SXL2"/>
<dbReference type="Proteomes" id="UP000000803">
    <property type="component" value="Chromosome 3R"/>
</dbReference>
<dbReference type="Bgee" id="FBgn0038147">
    <property type="expression patterns" value="Expressed in adult class III enteroendocrine cell in adult midgut (Drosophila) and 105 other cell types or tissues"/>
</dbReference>
<dbReference type="ExpressionAtlas" id="Q8SXL2">
    <property type="expression patterns" value="baseline and differential"/>
</dbReference>
<dbReference type="GO" id="GO:0005615">
    <property type="term" value="C:extracellular space"/>
    <property type="evidence" value="ECO:0000314"/>
    <property type="project" value="FlyBase"/>
</dbReference>
<dbReference type="GO" id="GO:0005184">
    <property type="term" value="F:neuropeptide hormone activity"/>
    <property type="evidence" value="ECO:0000314"/>
    <property type="project" value="FlyBase"/>
</dbReference>
<dbReference type="GO" id="GO:0007218">
    <property type="term" value="P:neuropeptide signaling pathway"/>
    <property type="evidence" value="ECO:0000314"/>
    <property type="project" value="FlyBase"/>
</dbReference>
<dbReference type="InterPro" id="IPR037729">
    <property type="entry name" value="CCHa1/2"/>
</dbReference>
<dbReference type="PANTHER" id="PTHR35980">
    <property type="entry name" value="NEUROPEPTIDE CCHAMIDE-1-RELATED"/>
    <property type="match status" value="1"/>
</dbReference>
<dbReference type="PANTHER" id="PTHR35980:SF1">
    <property type="entry name" value="NEUROPEPTIDE CCHAMIDE-1-RELATED"/>
    <property type="match status" value="1"/>
</dbReference>
<keyword id="KW-0027">Amidation</keyword>
<keyword id="KW-0903">Direct protein sequencing</keyword>
<keyword id="KW-1015">Disulfide bond</keyword>
<keyword id="KW-0372">Hormone</keyword>
<keyword id="KW-0527">Neuropeptide</keyword>
<keyword id="KW-1185">Reference proteome</keyword>
<keyword id="KW-0964">Secreted</keyword>
<keyword id="KW-0732">Signal</keyword>
<organism evidence="11">
    <name type="scientific">Drosophila melanogaster</name>
    <name type="common">Fruit fly</name>
    <dbReference type="NCBI Taxonomy" id="7227"/>
    <lineage>
        <taxon>Eukaryota</taxon>
        <taxon>Metazoa</taxon>
        <taxon>Ecdysozoa</taxon>
        <taxon>Arthropoda</taxon>
        <taxon>Hexapoda</taxon>
        <taxon>Insecta</taxon>
        <taxon>Pterygota</taxon>
        <taxon>Neoptera</taxon>
        <taxon>Endopterygota</taxon>
        <taxon>Diptera</taxon>
        <taxon>Brachycera</taxon>
        <taxon>Muscomorpha</taxon>
        <taxon>Ephydroidea</taxon>
        <taxon>Drosophilidae</taxon>
        <taxon>Drosophila</taxon>
        <taxon>Sophophora</taxon>
    </lineage>
</organism>
<sequence length="136" mass="14410">MKSTISLLLVVICTVVLAAQQSQAKKGCQAYGHVCYGGHGKRSLSPGSGSGTGVGGGMGEAASGGQEPDYVRPNGLLPMMAPNEQVPLEGDFNDYPARQVLYKIMKSWFNRPRRPASRLGELDYPLANSAELNGVN</sequence>
<comment type="function">
    <text evidence="2 4 7 8">Ligand for the CCHamide-2 receptor CCHa2-R (PubMed:21110953, PubMed:23293632). In one study, shown to be an orexigenic peptide which induces appetite and stimulates food intake, leading to the release of insulin-like peptides which stimulate growth (PubMed:26168160). In another study, shown to be a nutrient-sensitive peptide derived from peripheral tissues which controls growth by directly regulating the production and release of insulin-like peptides (PubMed:26020940).</text>
</comment>
<comment type="subcellular location">
    <subcellularLocation>
        <location evidence="10">Secreted</location>
    </subcellularLocation>
</comment>
<comment type="tissue specificity">
    <text evidence="5 6 7 8">Expressed in endocrine cells of the larval midgut (at protein level) (PubMed:24098432, PubMed:24850274). Also expressed in endocrine cells of the midgut of adult males and females (at protein level) (PubMed:24098432). In the midgut, expression occurs mainly in the anterior region (at protein level) (PubMed:24098432). In the larval central nervous system, expressed in about 40 neurons in the brain hemispheres and ventral nerve cord (at protein level) (PubMed:24098432). Highly expressed in larval and adult gut with low levels in larval and adult brain (PubMed:24098432). Very little expression in the larval fat body (PubMed:26168160). However, another study shows high levels of expression in the larval fat body as well as the larval gut with low levels in the larval central nervous system (PubMed:26020940).</text>
</comment>
<comment type="developmental stage">
    <text evidence="5">Very low expression in eggs. Expression increases during the first instar larval stage, decreases gradually during the second and third instar larval stages and in pupae and increases in adults.</text>
</comment>
<comment type="induction">
    <text evidence="7">Repressed in larvae by starvation for 18 hours with levels recovering when larvae are refed with yeast or glucose.</text>
</comment>
<comment type="mass spectrometry" mass="1347.69" method="MALDI" evidence="4"/>
<comment type="mass spectrometry" mass="1348.53" method="MALDI" evidence="3"/>
<comment type="disruption phenotype">
    <text evidence="7 8">Reduced food intake in adults and larvae, reduced locomotor activity, delayed development with mutants taking 200 hours to develop from egg to pupa compared to 130 hours for wild-type flies, reduced levels of the insulin-like peptides Ilp2 and Ilp3, and reduced wing size (PubMed:26168160). Reduced levels of insulin-like peptide Ilp5 and reduced body weight of mid-third instar larvae (PubMed:26020940).</text>
</comment>
<gene>
    <name evidence="12" type="primary">CCHa2</name>
    <name evidence="12" type="ORF">CG14375</name>
</gene>
<proteinExistence type="evidence at protein level"/>
<evidence type="ECO:0000256" key="1">
    <source>
        <dbReference type="SAM" id="MobiDB-lite"/>
    </source>
</evidence>
<evidence type="ECO:0000269" key="2">
    <source>
    </source>
</evidence>
<evidence type="ECO:0000269" key="3">
    <source>
    </source>
</evidence>
<evidence type="ECO:0000269" key="4">
    <source>
    </source>
</evidence>
<evidence type="ECO:0000269" key="5">
    <source>
    </source>
</evidence>
<evidence type="ECO:0000269" key="6">
    <source>
    </source>
</evidence>
<evidence type="ECO:0000269" key="7">
    <source>
    </source>
</evidence>
<evidence type="ECO:0000269" key="8">
    <source>
    </source>
</evidence>
<evidence type="ECO:0000303" key="9">
    <source>
    </source>
</evidence>
<evidence type="ECO:0000305" key="10"/>
<evidence type="ECO:0000312" key="11">
    <source>
        <dbReference type="EMBL" id="AAL90314.1"/>
    </source>
</evidence>
<evidence type="ECO:0000312" key="12">
    <source>
        <dbReference type="FlyBase" id="FBgn0038147"/>
    </source>
</evidence>
<evidence type="ECO:0000312" key="13">
    <source>
        <dbReference type="Proteomes" id="UP000000803"/>
    </source>
</evidence>
<feature type="signal peptide" evidence="3 4">
    <location>
        <begin position="1"/>
        <end position="24"/>
    </location>
</feature>
<feature type="peptide" id="PRO_0000435027" description="Neuropeptide CCHamide-2" evidence="3 4">
    <location>
        <begin position="27"/>
        <end position="39"/>
    </location>
</feature>
<feature type="propeptide" id="PRO_0000435028" evidence="3 4">
    <location>
        <begin position="43"/>
        <end position="136"/>
    </location>
</feature>
<feature type="region of interest" description="Disordered" evidence="1">
    <location>
        <begin position="42"/>
        <end position="78"/>
    </location>
</feature>
<feature type="compositionally biased region" description="Gly residues" evidence="1">
    <location>
        <begin position="48"/>
        <end position="59"/>
    </location>
</feature>
<feature type="modified residue" description="Histidine amide" evidence="3 4">
    <location>
        <position position="39"/>
    </location>
</feature>
<feature type="disulfide bond" evidence="3 4">
    <location>
        <begin position="28"/>
        <end position="35"/>
    </location>
</feature>
<protein>
    <recommendedName>
        <fullName evidence="9">Neuropeptide CCHamide-2</fullName>
    </recommendedName>
</protein>